<evidence type="ECO:0000255" key="1"/>
<evidence type="ECO:0000305" key="2"/>
<comment type="subcellular location">
    <subcellularLocation>
        <location evidence="2">Cell membrane</location>
        <topology evidence="2">Multi-pass membrane protein</topology>
    </subcellularLocation>
</comment>
<comment type="similarity">
    <text evidence="2">To A.fulgidus AF1754.</text>
</comment>
<organism>
    <name type="scientific">Methanocaldococcus jannaschii (strain ATCC 43067 / DSM 2661 / JAL-1 / JCM 10045 / NBRC 100440)</name>
    <name type="common">Methanococcus jannaschii</name>
    <dbReference type="NCBI Taxonomy" id="243232"/>
    <lineage>
        <taxon>Archaea</taxon>
        <taxon>Methanobacteriati</taxon>
        <taxon>Methanobacteriota</taxon>
        <taxon>Methanomada group</taxon>
        <taxon>Methanococci</taxon>
        <taxon>Methanococcales</taxon>
        <taxon>Methanocaldococcaceae</taxon>
        <taxon>Methanocaldococcus</taxon>
    </lineage>
</organism>
<accession>P81316</accession>
<dbReference type="EMBL" id="L77117">
    <property type="protein sequence ID" value="AAB99154.1"/>
    <property type="molecule type" value="Genomic_DNA"/>
</dbReference>
<dbReference type="RefSeq" id="WP_010870667.1">
    <property type="nucleotide sequence ID" value="NC_000909.1"/>
</dbReference>
<dbReference type="SMR" id="P81316"/>
<dbReference type="STRING" id="243232.MJ_1155.1"/>
<dbReference type="PaxDb" id="243232-MJ_1155.1"/>
<dbReference type="DNASU" id="1452052"/>
<dbReference type="EnsemblBacteria" id="AAB99154">
    <property type="protein sequence ID" value="AAB99154"/>
    <property type="gene ID" value="MJ_1155.1"/>
</dbReference>
<dbReference type="GeneID" id="1452052"/>
<dbReference type="KEGG" id="mja:MJ_1155.1"/>
<dbReference type="eggNOG" id="arCOG07899">
    <property type="taxonomic scope" value="Archaea"/>
</dbReference>
<dbReference type="HOGENOM" id="CLU_172997_0_0_2"/>
<dbReference type="InParanoid" id="P81316"/>
<dbReference type="OrthoDB" id="65983at2157"/>
<dbReference type="Proteomes" id="UP000000805">
    <property type="component" value="Chromosome"/>
</dbReference>
<dbReference type="GO" id="GO:0005886">
    <property type="term" value="C:plasma membrane"/>
    <property type="evidence" value="ECO:0007669"/>
    <property type="project" value="UniProtKB-SubCell"/>
</dbReference>
<dbReference type="InterPro" id="IPR008407">
    <property type="entry name" value="Brnchd-chn_aa_trnsp_AzlD"/>
</dbReference>
<dbReference type="Pfam" id="PF05437">
    <property type="entry name" value="AzlD"/>
    <property type="match status" value="1"/>
</dbReference>
<proteinExistence type="predicted"/>
<name>YB5A_METJA</name>
<sequence length="110" mass="12498">MDKNILAIIFVAVGTYLIRYIPIHLHSKIKNIDEKVKEINEILIYSSTSVISALFITSFIKFPIIFSNVLISTISLIFAIVSYKKWNNLGISILISVVIYYLASKFLISI</sequence>
<keyword id="KW-1003">Cell membrane</keyword>
<keyword id="KW-0472">Membrane</keyword>
<keyword id="KW-1185">Reference proteome</keyword>
<keyword id="KW-0812">Transmembrane</keyword>
<keyword id="KW-1133">Transmembrane helix</keyword>
<gene>
    <name type="ordered locus">MJ1155.1</name>
</gene>
<reference key="1">
    <citation type="journal article" date="1996" name="Science">
        <title>Complete genome sequence of the methanogenic archaeon, Methanococcus jannaschii.</title>
        <authorList>
            <person name="Bult C.J."/>
            <person name="White O."/>
            <person name="Olsen G.J."/>
            <person name="Zhou L."/>
            <person name="Fleischmann R.D."/>
            <person name="Sutton G.G."/>
            <person name="Blake J.A."/>
            <person name="FitzGerald L.M."/>
            <person name="Clayton R.A."/>
            <person name="Gocayne J.D."/>
            <person name="Kerlavage A.R."/>
            <person name="Dougherty B.A."/>
            <person name="Tomb J.-F."/>
            <person name="Adams M.D."/>
            <person name="Reich C.I."/>
            <person name="Overbeek R."/>
            <person name="Kirkness E.F."/>
            <person name="Weinstock K.G."/>
            <person name="Merrick J.M."/>
            <person name="Glodek A."/>
            <person name="Scott J.L."/>
            <person name="Geoghagen N.S.M."/>
            <person name="Weidman J.F."/>
            <person name="Fuhrmann J.L."/>
            <person name="Nguyen D."/>
            <person name="Utterback T.R."/>
            <person name="Kelley J.M."/>
            <person name="Peterson J.D."/>
            <person name="Sadow P.W."/>
            <person name="Hanna M.C."/>
            <person name="Cotton M.D."/>
            <person name="Roberts K.M."/>
            <person name="Hurst M.A."/>
            <person name="Kaine B.P."/>
            <person name="Borodovsky M."/>
            <person name="Klenk H.-P."/>
            <person name="Fraser C.M."/>
            <person name="Smith H.O."/>
            <person name="Woese C.R."/>
            <person name="Venter J.C."/>
        </authorList>
    </citation>
    <scope>NUCLEOTIDE SEQUENCE [LARGE SCALE GENOMIC DNA]</scope>
    <source>
        <strain>ATCC 43067 / DSM 2661 / JAL-1 / JCM 10045 / NBRC 100440</strain>
    </source>
</reference>
<feature type="chain" id="PRO_0000107193" description="Uncharacterized protein MJ1155.1">
    <location>
        <begin position="1"/>
        <end position="110"/>
    </location>
</feature>
<feature type="transmembrane region" description="Helical" evidence="1">
    <location>
        <begin position="5"/>
        <end position="25"/>
    </location>
</feature>
<feature type="transmembrane region" description="Helical" evidence="1">
    <location>
        <begin position="62"/>
        <end position="82"/>
    </location>
</feature>
<feature type="transmembrane region" description="Helical" evidence="1">
    <location>
        <begin position="90"/>
        <end position="110"/>
    </location>
</feature>
<protein>
    <recommendedName>
        <fullName>Uncharacterized protein MJ1155.1</fullName>
    </recommendedName>
</protein>